<organism>
    <name type="scientific">Mesocricetus auratus</name>
    <name type="common">Golden hamster</name>
    <dbReference type="NCBI Taxonomy" id="10036"/>
    <lineage>
        <taxon>Eukaryota</taxon>
        <taxon>Metazoa</taxon>
        <taxon>Chordata</taxon>
        <taxon>Craniata</taxon>
        <taxon>Vertebrata</taxon>
        <taxon>Euteleostomi</taxon>
        <taxon>Mammalia</taxon>
        <taxon>Eutheria</taxon>
        <taxon>Euarchontoglires</taxon>
        <taxon>Glires</taxon>
        <taxon>Rodentia</taxon>
        <taxon>Myomorpha</taxon>
        <taxon>Muroidea</taxon>
        <taxon>Cricetidae</taxon>
        <taxon>Cricetinae</taxon>
        <taxon>Mesocricetus</taxon>
    </lineage>
</organism>
<name>KCNV1_MESAU</name>
<feature type="chain" id="PRO_0000308352" description="Potassium voltage-gated channel subfamily V member 1">
    <location>
        <begin position="1"/>
        <end position="504"/>
    </location>
</feature>
<feature type="topological domain" description="Cytoplasmic" evidence="2">
    <location>
        <begin position="1"/>
        <end position="214"/>
    </location>
</feature>
<feature type="transmembrane region" description="Helical; Name=Segment S1" evidence="2">
    <location>
        <begin position="215"/>
        <end position="235"/>
    </location>
</feature>
<feature type="topological domain" description="Extracellular" evidence="2">
    <location>
        <begin position="236"/>
        <end position="242"/>
    </location>
</feature>
<feature type="transmembrane region" description="Helical; Name=Segment S2" evidence="2">
    <location>
        <begin position="243"/>
        <end position="263"/>
    </location>
</feature>
<feature type="topological domain" description="Cytoplasmic" evidence="2">
    <location>
        <begin position="264"/>
        <end position="280"/>
    </location>
</feature>
<feature type="transmembrane region" description="Helical; Name=Segment S3" evidence="2">
    <location>
        <begin position="281"/>
        <end position="301"/>
    </location>
</feature>
<feature type="topological domain" description="Extracellular" evidence="2">
    <location>
        <begin position="302"/>
        <end position="313"/>
    </location>
</feature>
<feature type="transmembrane region" description="Helical; Voltage-sensor; Name=Segment S4" evidence="2">
    <location>
        <begin position="314"/>
        <end position="335"/>
    </location>
</feature>
<feature type="topological domain" description="Cytoplasmic" evidence="2">
    <location>
        <begin position="336"/>
        <end position="349"/>
    </location>
</feature>
<feature type="transmembrane region" description="Helical; Name=Segment S5" evidence="2">
    <location>
        <begin position="350"/>
        <end position="370"/>
    </location>
</feature>
<feature type="transmembrane region" description="Helical; Name=Segment S6" evidence="2">
    <location>
        <begin position="411"/>
        <end position="431"/>
    </location>
</feature>
<feature type="topological domain" description="Cytoplasmic" evidence="2">
    <location>
        <begin position="432"/>
        <end position="504"/>
    </location>
</feature>
<feature type="region of interest" description="Disordered" evidence="3">
    <location>
        <begin position="1"/>
        <end position="22"/>
    </location>
</feature>
<feature type="region of interest" description="Disordered" evidence="3">
    <location>
        <begin position="172"/>
        <end position="193"/>
    </location>
</feature>
<feature type="short sequence motif" description="Selectivity filter" evidence="1">
    <location>
        <begin position="396"/>
        <end position="401"/>
    </location>
</feature>
<feature type="compositionally biased region" description="Low complexity" evidence="3">
    <location>
        <begin position="10"/>
        <end position="22"/>
    </location>
</feature>
<feature type="compositionally biased region" description="Basic and acidic residues" evidence="3">
    <location>
        <begin position="172"/>
        <end position="185"/>
    </location>
</feature>
<keyword id="KW-1003">Cell membrane</keyword>
<keyword id="KW-0407">Ion channel</keyword>
<keyword id="KW-0406">Ion transport</keyword>
<keyword id="KW-0472">Membrane</keyword>
<keyword id="KW-0630">Potassium</keyword>
<keyword id="KW-0631">Potassium channel</keyword>
<keyword id="KW-0633">Potassium transport</keyword>
<keyword id="KW-1185">Reference proteome</keyword>
<keyword id="KW-0812">Transmembrane</keyword>
<keyword id="KW-1133">Transmembrane helix</keyword>
<keyword id="KW-0813">Transport</keyword>
<keyword id="KW-0851">Voltage-gated channel</keyword>
<proteinExistence type="evidence at transcript level"/>
<reference key="1">
    <citation type="journal article" date="1996" name="EMBO J.">
        <title>Kv8.1, a new neuronal potassium channel subunit with specific inhibitory properties towards Shab and Shaw channels.</title>
        <authorList>
            <person name="Hugnot J.-P."/>
            <person name="Salinas M."/>
            <person name="Lesage F."/>
            <person name="Guillemare E."/>
            <person name="de Weille J."/>
            <person name="Heurteaux C."/>
            <person name="Mattei M.-G."/>
            <person name="Lazdunski M."/>
        </authorList>
    </citation>
    <scope>NUCLEOTIDE SEQUENCE [MRNA]</scope>
    <scope>TISSUE SPECIFICITY</scope>
</reference>
<dbReference type="EMBL" id="U62810">
    <property type="protein sequence ID" value="AAC52727.1"/>
    <property type="molecule type" value="mRNA"/>
</dbReference>
<dbReference type="RefSeq" id="NP_001268571.1">
    <property type="nucleotide sequence ID" value="NM_001281642.1"/>
</dbReference>
<dbReference type="RefSeq" id="XP_012970704.1">
    <property type="nucleotide sequence ID" value="XM_013115250.1"/>
</dbReference>
<dbReference type="SMR" id="Q60565"/>
<dbReference type="STRING" id="10036.ENSMAUP00000006447"/>
<dbReference type="Ensembl" id="ENSMAUT00000010248">
    <property type="protein sequence ID" value="ENSMAUP00000006447"/>
    <property type="gene ID" value="ENSMAUG00000008386"/>
</dbReference>
<dbReference type="GeneID" id="101835683"/>
<dbReference type="KEGG" id="maua:101835683"/>
<dbReference type="CTD" id="27012"/>
<dbReference type="eggNOG" id="KOG3713">
    <property type="taxonomic scope" value="Eukaryota"/>
</dbReference>
<dbReference type="OrthoDB" id="296522at2759"/>
<dbReference type="Proteomes" id="UP000189706">
    <property type="component" value="Unplaced"/>
</dbReference>
<dbReference type="GO" id="GO:0045171">
    <property type="term" value="C:intercellular bridge"/>
    <property type="evidence" value="ECO:0007669"/>
    <property type="project" value="Ensembl"/>
</dbReference>
<dbReference type="GO" id="GO:0008076">
    <property type="term" value="C:voltage-gated potassium channel complex"/>
    <property type="evidence" value="ECO:0007669"/>
    <property type="project" value="InterPro"/>
</dbReference>
<dbReference type="GO" id="GO:0005249">
    <property type="term" value="F:voltage-gated potassium channel activity"/>
    <property type="evidence" value="ECO:0007669"/>
    <property type="project" value="InterPro"/>
</dbReference>
<dbReference type="GO" id="GO:0001508">
    <property type="term" value="P:action potential"/>
    <property type="evidence" value="ECO:0007669"/>
    <property type="project" value="TreeGrafter"/>
</dbReference>
<dbReference type="GO" id="GO:0051260">
    <property type="term" value="P:protein homooligomerization"/>
    <property type="evidence" value="ECO:0007669"/>
    <property type="project" value="InterPro"/>
</dbReference>
<dbReference type="FunFam" id="1.10.287.70:FF:000005">
    <property type="entry name" value="potassium voltage-gated channel subfamily G member 1"/>
    <property type="match status" value="1"/>
</dbReference>
<dbReference type="FunFam" id="1.20.120.350:FF:000044">
    <property type="entry name" value="Potassium voltage-gated channel subfamily V member 1"/>
    <property type="match status" value="1"/>
</dbReference>
<dbReference type="FunFam" id="3.30.710.10:FF:000067">
    <property type="entry name" value="Potassium voltage-gated channel subfamily V member 1"/>
    <property type="match status" value="1"/>
</dbReference>
<dbReference type="Gene3D" id="1.10.287.70">
    <property type="match status" value="1"/>
</dbReference>
<dbReference type="Gene3D" id="3.30.710.10">
    <property type="entry name" value="Potassium Channel Kv1.1, Chain A"/>
    <property type="match status" value="1"/>
</dbReference>
<dbReference type="Gene3D" id="1.20.120.350">
    <property type="entry name" value="Voltage-gated potassium channels. Chain C"/>
    <property type="match status" value="1"/>
</dbReference>
<dbReference type="InterPro" id="IPR000210">
    <property type="entry name" value="BTB/POZ_dom"/>
</dbReference>
<dbReference type="InterPro" id="IPR005821">
    <property type="entry name" value="Ion_trans_dom"/>
</dbReference>
<dbReference type="InterPro" id="IPR003968">
    <property type="entry name" value="K_chnl_volt-dep_Kv"/>
</dbReference>
<dbReference type="InterPro" id="IPR003970">
    <property type="entry name" value="K_chnl_volt-dep_Kv8.1"/>
</dbReference>
<dbReference type="InterPro" id="IPR011333">
    <property type="entry name" value="SKP1/BTB/POZ_sf"/>
</dbReference>
<dbReference type="InterPro" id="IPR003131">
    <property type="entry name" value="T1-type_BTB"/>
</dbReference>
<dbReference type="InterPro" id="IPR028325">
    <property type="entry name" value="VG_K_chnl"/>
</dbReference>
<dbReference type="InterPro" id="IPR027359">
    <property type="entry name" value="Volt_channel_dom_sf"/>
</dbReference>
<dbReference type="PANTHER" id="PTHR11537:SF38">
    <property type="entry name" value="POTASSIUM VOLTAGE-GATED CHANNEL SUBFAMILY V MEMBER 1"/>
    <property type="match status" value="1"/>
</dbReference>
<dbReference type="PANTHER" id="PTHR11537">
    <property type="entry name" value="VOLTAGE-GATED POTASSIUM CHANNEL"/>
    <property type="match status" value="1"/>
</dbReference>
<dbReference type="Pfam" id="PF02214">
    <property type="entry name" value="BTB_2"/>
    <property type="match status" value="1"/>
</dbReference>
<dbReference type="Pfam" id="PF00520">
    <property type="entry name" value="Ion_trans"/>
    <property type="match status" value="1"/>
</dbReference>
<dbReference type="PRINTS" id="PR00169">
    <property type="entry name" value="KCHANNEL"/>
</dbReference>
<dbReference type="PRINTS" id="PR01493">
    <property type="entry name" value="KV8CHANNEL"/>
</dbReference>
<dbReference type="PRINTS" id="PR01491">
    <property type="entry name" value="KVCHANNEL"/>
</dbReference>
<dbReference type="SMART" id="SM00225">
    <property type="entry name" value="BTB"/>
    <property type="match status" value="1"/>
</dbReference>
<dbReference type="SUPFAM" id="SSF54695">
    <property type="entry name" value="POZ domain"/>
    <property type="match status" value="1"/>
</dbReference>
<dbReference type="SUPFAM" id="SSF81324">
    <property type="entry name" value="Voltage-gated potassium channels"/>
    <property type="match status" value="1"/>
</dbReference>
<sequence length="504" mass="56725">MDLSPRNRPLLESSSLDSGGSLSSLDSSVFCSEGEGEPLALGDCLTVNVGGSRFVLSQQALSCFPHTRLGKLAVVVASYRRLGALAAAPSPLELCDDANPVDNEYFFDRSSQAFRYVLHYYRTGRLHVMEQLCALSFLQEIQYWGIDELSIDSCCRDRYFRRKELSETLDFKKDTDDQESQHESEQDFSQGPCPTVRQKLWDILEKPGSSTAARIFGVISIIFVAVSIVNMALMSAELSWLNLQLLEILEYVCISWFTGEFILRFLCVKDRCRFLRKVPNIIDLLAILPFYITLLVESLSGSHTTQELENVGRLVQVLRLLRALRMLKLGRHSTGLRSLGMTITQCYEEVGLLLLFLSVGISIFSTIEYFAEQSIPDTTFTSVPCAWWWATTSMTTVGYGDIRPDTTTGKIVAFMCILSGILVLALPIAIINDRFSACYFTLKLKEAAVRQREALKKLTKNIATDSYISVNLRDVYARSIMEMLRLKGRERASTRSSGGDDFWF</sequence>
<evidence type="ECO:0000250" key="1"/>
<evidence type="ECO:0000255" key="2"/>
<evidence type="ECO:0000256" key="3">
    <source>
        <dbReference type="SAM" id="MobiDB-lite"/>
    </source>
</evidence>
<evidence type="ECO:0000269" key="4">
    <source>
    </source>
</evidence>
<evidence type="ECO:0000305" key="5"/>
<gene>
    <name type="primary">KCNV1</name>
</gene>
<accession>Q60565</accession>
<comment type="function">
    <text evidence="1">Potassium channel subunit that does not form functional channels by itself. Modulates KCNB1 and KCNB2 channel activity by shifting the threshold for inactivation to more negative values and by slowing the rate of inactivation. Can down-regulate the channel activity of KCNB1, KCNB2, KCNC4 and KCND1, possibly by trapping them in intracellular membranes (By similarity).</text>
</comment>
<comment type="subunit">
    <text evidence="1">Heteromultimer with KCNB1 and KCNB2. Interacts with KCNC4 and KCND1 (By similarity).</text>
</comment>
<comment type="subcellular location">
    <subcellularLocation>
        <location evidence="1">Cell membrane</location>
        <topology evidence="1">Multi-pass membrane protein</topology>
    </subcellularLocation>
    <text evidence="1">Has to be associated with another potassium channel subunit to get inserted in the plasma membrane. Remains intracellular in the absence of KCNB2 (By similarity).</text>
</comment>
<comment type="tissue specificity">
    <text evidence="4">Detected in brain, throughout layers II, IV and VI of the brain cortex. Detected in cerebellum and hippocampus, in the granule cell layer, Purkinje cell layer, pyramidal cell layer and dentate gyrus. Detected at lower levels in olfactory bulb, amygdala, thalamus, hypothalamus, midbrain and brainstem.</text>
</comment>
<comment type="domain">
    <text evidence="1">The segment S4 is probably the voltage-sensor and is characterized by a series of positively charged amino acids at every third position.</text>
</comment>
<comment type="similarity">
    <text evidence="5">Belongs to the potassium channel family. V (TC 1.A.1.2) subfamily. Kv8.1/KCNV1 sub-subfamily.</text>
</comment>
<protein>
    <recommendedName>
        <fullName>Potassium voltage-gated channel subfamily V member 1</fullName>
    </recommendedName>
    <alternativeName>
        <fullName>Voltage-gated potassium channel subunit Kv8.1</fullName>
    </alternativeName>
</protein>